<organism>
    <name type="scientific">Burkholderia mallei (strain NCTC 10247)</name>
    <dbReference type="NCBI Taxonomy" id="320389"/>
    <lineage>
        <taxon>Bacteria</taxon>
        <taxon>Pseudomonadati</taxon>
        <taxon>Pseudomonadota</taxon>
        <taxon>Betaproteobacteria</taxon>
        <taxon>Burkholderiales</taxon>
        <taxon>Burkholderiaceae</taxon>
        <taxon>Burkholderia</taxon>
        <taxon>pseudomallei group</taxon>
    </lineage>
</organism>
<protein>
    <recommendedName>
        <fullName evidence="1">Small ribosomal subunit protein uS3</fullName>
    </recommendedName>
    <alternativeName>
        <fullName evidence="3">30S ribosomal protein S3</fullName>
    </alternativeName>
</protein>
<dbReference type="EMBL" id="CP000548">
    <property type="protein sequence ID" value="ABO06063.1"/>
    <property type="molecule type" value="Genomic_DNA"/>
</dbReference>
<dbReference type="RefSeq" id="WP_004185240.1">
    <property type="nucleotide sequence ID" value="NZ_CP007802.1"/>
</dbReference>
<dbReference type="SMR" id="A3MRW0"/>
<dbReference type="GeneID" id="93061826"/>
<dbReference type="KEGG" id="bmaz:BM44_3035"/>
<dbReference type="KEGG" id="bmn:BMA10247_3484"/>
<dbReference type="PATRIC" id="fig|320389.8.peg.3407"/>
<dbReference type="GO" id="GO:0022627">
    <property type="term" value="C:cytosolic small ribosomal subunit"/>
    <property type="evidence" value="ECO:0007669"/>
    <property type="project" value="TreeGrafter"/>
</dbReference>
<dbReference type="GO" id="GO:0003729">
    <property type="term" value="F:mRNA binding"/>
    <property type="evidence" value="ECO:0007669"/>
    <property type="project" value="UniProtKB-UniRule"/>
</dbReference>
<dbReference type="GO" id="GO:0019843">
    <property type="term" value="F:rRNA binding"/>
    <property type="evidence" value="ECO:0007669"/>
    <property type="project" value="UniProtKB-UniRule"/>
</dbReference>
<dbReference type="GO" id="GO:0003735">
    <property type="term" value="F:structural constituent of ribosome"/>
    <property type="evidence" value="ECO:0007669"/>
    <property type="project" value="InterPro"/>
</dbReference>
<dbReference type="GO" id="GO:0006412">
    <property type="term" value="P:translation"/>
    <property type="evidence" value="ECO:0007669"/>
    <property type="project" value="UniProtKB-UniRule"/>
</dbReference>
<dbReference type="CDD" id="cd02412">
    <property type="entry name" value="KH-II_30S_S3"/>
    <property type="match status" value="1"/>
</dbReference>
<dbReference type="FunFam" id="3.30.1140.32:FF:000006">
    <property type="entry name" value="30S ribosomal protein S3"/>
    <property type="match status" value="1"/>
</dbReference>
<dbReference type="FunFam" id="3.30.300.20:FF:000001">
    <property type="entry name" value="30S ribosomal protein S3"/>
    <property type="match status" value="1"/>
</dbReference>
<dbReference type="Gene3D" id="3.30.300.20">
    <property type="match status" value="1"/>
</dbReference>
<dbReference type="Gene3D" id="3.30.1140.32">
    <property type="entry name" value="Ribosomal protein S3, C-terminal domain"/>
    <property type="match status" value="1"/>
</dbReference>
<dbReference type="HAMAP" id="MF_01309_B">
    <property type="entry name" value="Ribosomal_uS3_B"/>
    <property type="match status" value="1"/>
</dbReference>
<dbReference type="InterPro" id="IPR004087">
    <property type="entry name" value="KH_dom"/>
</dbReference>
<dbReference type="InterPro" id="IPR015946">
    <property type="entry name" value="KH_dom-like_a/b"/>
</dbReference>
<dbReference type="InterPro" id="IPR004044">
    <property type="entry name" value="KH_dom_type_2"/>
</dbReference>
<dbReference type="InterPro" id="IPR009019">
    <property type="entry name" value="KH_sf_prok-type"/>
</dbReference>
<dbReference type="InterPro" id="IPR036419">
    <property type="entry name" value="Ribosomal_S3_C_sf"/>
</dbReference>
<dbReference type="InterPro" id="IPR005704">
    <property type="entry name" value="Ribosomal_uS3_bac-typ"/>
</dbReference>
<dbReference type="InterPro" id="IPR001351">
    <property type="entry name" value="Ribosomal_uS3_C"/>
</dbReference>
<dbReference type="InterPro" id="IPR018280">
    <property type="entry name" value="Ribosomal_uS3_CS"/>
</dbReference>
<dbReference type="NCBIfam" id="TIGR01009">
    <property type="entry name" value="rpsC_bact"/>
    <property type="match status" value="1"/>
</dbReference>
<dbReference type="PANTHER" id="PTHR11760">
    <property type="entry name" value="30S/40S RIBOSOMAL PROTEIN S3"/>
    <property type="match status" value="1"/>
</dbReference>
<dbReference type="PANTHER" id="PTHR11760:SF19">
    <property type="entry name" value="SMALL RIBOSOMAL SUBUNIT PROTEIN US3C"/>
    <property type="match status" value="1"/>
</dbReference>
<dbReference type="Pfam" id="PF07650">
    <property type="entry name" value="KH_2"/>
    <property type="match status" value="1"/>
</dbReference>
<dbReference type="Pfam" id="PF00189">
    <property type="entry name" value="Ribosomal_S3_C"/>
    <property type="match status" value="1"/>
</dbReference>
<dbReference type="SMART" id="SM00322">
    <property type="entry name" value="KH"/>
    <property type="match status" value="1"/>
</dbReference>
<dbReference type="SUPFAM" id="SSF54814">
    <property type="entry name" value="Prokaryotic type KH domain (KH-domain type II)"/>
    <property type="match status" value="1"/>
</dbReference>
<dbReference type="SUPFAM" id="SSF54821">
    <property type="entry name" value="Ribosomal protein S3 C-terminal domain"/>
    <property type="match status" value="1"/>
</dbReference>
<dbReference type="PROSITE" id="PS50823">
    <property type="entry name" value="KH_TYPE_2"/>
    <property type="match status" value="1"/>
</dbReference>
<dbReference type="PROSITE" id="PS00548">
    <property type="entry name" value="RIBOSOMAL_S3"/>
    <property type="match status" value="1"/>
</dbReference>
<sequence length="266" mass="29919">MGQKIHPTGFRLAVSRNWASRWYANNNNFAAMLQEDIGVREYLKKKLKNASVGRVVIERPAKNARITIFSSRPGVVIGKKGEDIELLKTELQRRMGVPVHVNIEEIRKPETDAQLIADSITQQLERRIMFRRAMKRAMQNAMRLGAQGIKIMSAGRLNGIEIARTEWYREGRVPLHTLRADIDYATSEAKTTYGIIGVKVWVYKGDTLGRNDAPVVEEVTEDKRPRRNARPGDRRPRRDGEGGAPGARRGGPRRGAGKPEDGKTGE</sequence>
<feature type="chain" id="PRO_1000086096" description="Small ribosomal subunit protein uS3">
    <location>
        <begin position="1"/>
        <end position="266"/>
    </location>
</feature>
<feature type="domain" description="KH type-2" evidence="1">
    <location>
        <begin position="39"/>
        <end position="107"/>
    </location>
</feature>
<feature type="region of interest" description="Disordered" evidence="2">
    <location>
        <begin position="214"/>
        <end position="266"/>
    </location>
</feature>
<feature type="compositionally biased region" description="Basic and acidic residues" evidence="2">
    <location>
        <begin position="230"/>
        <end position="241"/>
    </location>
</feature>
<feature type="compositionally biased region" description="Basic and acidic residues" evidence="2">
    <location>
        <begin position="257"/>
        <end position="266"/>
    </location>
</feature>
<accession>A3MRW0</accession>
<reference key="1">
    <citation type="journal article" date="2010" name="Genome Biol. Evol.">
        <title>Continuing evolution of Burkholderia mallei through genome reduction and large-scale rearrangements.</title>
        <authorList>
            <person name="Losada L."/>
            <person name="Ronning C.M."/>
            <person name="DeShazer D."/>
            <person name="Woods D."/>
            <person name="Fedorova N."/>
            <person name="Kim H.S."/>
            <person name="Shabalina S.A."/>
            <person name="Pearson T.R."/>
            <person name="Brinkac L."/>
            <person name="Tan P."/>
            <person name="Nandi T."/>
            <person name="Crabtree J."/>
            <person name="Badger J."/>
            <person name="Beckstrom-Sternberg S."/>
            <person name="Saqib M."/>
            <person name="Schutzer S.E."/>
            <person name="Keim P."/>
            <person name="Nierman W.C."/>
        </authorList>
    </citation>
    <scope>NUCLEOTIDE SEQUENCE [LARGE SCALE GENOMIC DNA]</scope>
    <source>
        <strain>NCTC 10247</strain>
    </source>
</reference>
<gene>
    <name evidence="1" type="primary">rpsC</name>
    <name type="ordered locus">BMA10247_3484</name>
</gene>
<evidence type="ECO:0000255" key="1">
    <source>
        <dbReference type="HAMAP-Rule" id="MF_01309"/>
    </source>
</evidence>
<evidence type="ECO:0000256" key="2">
    <source>
        <dbReference type="SAM" id="MobiDB-lite"/>
    </source>
</evidence>
<evidence type="ECO:0000305" key="3"/>
<proteinExistence type="inferred from homology"/>
<keyword id="KW-0687">Ribonucleoprotein</keyword>
<keyword id="KW-0689">Ribosomal protein</keyword>
<keyword id="KW-0694">RNA-binding</keyword>
<keyword id="KW-0699">rRNA-binding</keyword>
<name>RS3_BURM7</name>
<comment type="function">
    <text evidence="1">Binds the lower part of the 30S subunit head. Binds mRNA in the 70S ribosome, positioning it for translation.</text>
</comment>
<comment type="subunit">
    <text evidence="1">Part of the 30S ribosomal subunit. Forms a tight complex with proteins S10 and S14.</text>
</comment>
<comment type="similarity">
    <text evidence="1">Belongs to the universal ribosomal protein uS3 family.</text>
</comment>